<feature type="peptide" id="PRO_0000044938" description="Insectotoxin-I5" evidence="4">
    <location>
        <begin position="1"/>
        <end position="35"/>
    </location>
</feature>
<feature type="disulfide bond" evidence="1 3">
    <location>
        <begin position="2"/>
        <end position="19"/>
    </location>
</feature>
<feature type="disulfide bond" evidence="1 3">
    <location>
        <begin position="5"/>
        <end position="26"/>
    </location>
</feature>
<feature type="disulfide bond" evidence="1 3">
    <location>
        <begin position="16"/>
        <end position="31"/>
    </location>
</feature>
<feature type="disulfide bond" evidence="1 3">
    <location>
        <begin position="20"/>
        <end position="33"/>
    </location>
</feature>
<keyword id="KW-1265">Chloride channel impairing toxin</keyword>
<keyword id="KW-0903">Direct protein sequencing</keyword>
<keyword id="KW-1015">Disulfide bond</keyword>
<keyword id="KW-0872">Ion channel impairing toxin</keyword>
<keyword id="KW-0960">Knottin</keyword>
<keyword id="KW-0964">Secreted</keyword>
<keyword id="KW-0800">Toxin</keyword>
<keyword id="KW-0870">Voltage-gated chloride channel impairing toxin</keyword>
<protein>
    <recommendedName>
        <fullName evidence="5">Insectotoxin-I5</fullName>
    </recommendedName>
    <alternativeName>
        <fullName>BeI5</fullName>
    </alternativeName>
</protein>
<name>CTXI5_MESEU</name>
<organism>
    <name type="scientific">Mesobuthus eupeus</name>
    <name type="common">Lesser Asian scorpion</name>
    <name type="synonym">Buthus eupeus</name>
    <dbReference type="NCBI Taxonomy" id="34648"/>
    <lineage>
        <taxon>Eukaryota</taxon>
        <taxon>Metazoa</taxon>
        <taxon>Ecdysozoa</taxon>
        <taxon>Arthropoda</taxon>
        <taxon>Chelicerata</taxon>
        <taxon>Arachnida</taxon>
        <taxon>Scorpiones</taxon>
        <taxon>Buthida</taxon>
        <taxon>Buthoidea</taxon>
        <taxon>Buthidae</taxon>
        <taxon>Mesobuthus</taxon>
    </lineage>
</organism>
<dbReference type="PIR" id="JN0361">
    <property type="entry name" value="JN0361"/>
</dbReference>
<dbReference type="SMR" id="P60270"/>
<dbReference type="GO" id="GO:0005576">
    <property type="term" value="C:extracellular region"/>
    <property type="evidence" value="ECO:0007669"/>
    <property type="project" value="UniProtKB-SubCell"/>
</dbReference>
<dbReference type="GO" id="GO:0017081">
    <property type="term" value="F:chloride channel regulator activity"/>
    <property type="evidence" value="ECO:0007669"/>
    <property type="project" value="UniProtKB-KW"/>
</dbReference>
<dbReference type="GO" id="GO:0090729">
    <property type="term" value="F:toxin activity"/>
    <property type="evidence" value="ECO:0007669"/>
    <property type="project" value="UniProtKB-KW"/>
</dbReference>
<dbReference type="InterPro" id="IPR036574">
    <property type="entry name" value="Scorpion_toxin-like_sf"/>
</dbReference>
<dbReference type="InterPro" id="IPR007958">
    <property type="entry name" value="Scorpion_toxinS_Cl_inh"/>
</dbReference>
<dbReference type="Pfam" id="PF05294">
    <property type="entry name" value="Toxin_5"/>
    <property type="match status" value="1"/>
</dbReference>
<dbReference type="SUPFAM" id="SSF57095">
    <property type="entry name" value="Scorpion toxin-like"/>
    <property type="match status" value="1"/>
</dbReference>
<dbReference type="PROSITE" id="PS51200">
    <property type="entry name" value="SHORT_SCORPION_CHLORIDE"/>
    <property type="match status" value="1"/>
</dbReference>
<accession>P60270</accession>
<sequence length="35" mass="3835">MCMPCFTTDPNMANKCRDCCGGGKKCFGPQCLCNR</sequence>
<reference key="1">
    <citation type="journal article" date="1998" name="FEBS Lett.">
        <title>Purification and partial characterization of a 'short' insectotoxin-like peptide from the venom of the scorpion Parabuthus schlechteri.</title>
        <authorList>
            <person name="Tytgat J."/>
            <person name="Debont T."/>
            <person name="Rostoll K."/>
            <person name="Mueller G.J."/>
            <person name="Verdonck F."/>
            <person name="Daenens P."/>
            <person name="van der Walt J.J."/>
            <person name="Possani L.D."/>
        </authorList>
    </citation>
    <scope>PROTEIN SEQUENCE</scope>
    <scope>SUBCELLULAR LOCATION</scope>
    <source>
        <tissue>Venom</tissue>
    </source>
</reference>
<comment type="function">
    <text evidence="2">Toxin with unknown function in healthy organisms. On glioma cells, interacts with chloride channels (probably ClC-3/CLCN3) and MMP2 at the surface of glioma cells. This complex is then internalized via caveolae, thus inhibiting the chloride channels necessary for cell shrinkage and tumor propagation.</text>
</comment>
<comment type="subcellular location">
    <subcellularLocation>
        <location evidence="4">Secreted</location>
    </subcellularLocation>
</comment>
<comment type="tissue specificity">
    <text evidence="6">Expressed by the venom gland.</text>
</comment>
<comment type="domain">
    <text evidence="1">The presence of a 'disulfide through disulfide knot' structurally defines this protein as a knottin.</text>
</comment>
<comment type="similarity">
    <text evidence="3">Belongs to the short scorpion toxin superfamily. Chloride channel inhibitor family.</text>
</comment>
<proteinExistence type="evidence at protein level"/>
<evidence type="ECO:0000250" key="1">
    <source>
        <dbReference type="UniProtKB" id="P15222"/>
    </source>
</evidence>
<evidence type="ECO:0000250" key="2">
    <source>
        <dbReference type="UniProtKB" id="Q9UAD0"/>
    </source>
</evidence>
<evidence type="ECO:0000255" key="3">
    <source>
        <dbReference type="PROSITE-ProRule" id="PRU00545"/>
    </source>
</evidence>
<evidence type="ECO:0000269" key="4">
    <source>
    </source>
</evidence>
<evidence type="ECO:0000303" key="5">
    <source>
    </source>
</evidence>
<evidence type="ECO:0000305" key="6">
    <source>
    </source>
</evidence>